<sequence length="411" mass="46559">MRFAWTVLFLGQLQFCPLLRCAPQAPREPPAAPGAWRQTIQWENNGQVFSLLSLGAQYQPQRRRDSSATAPRADGNAAAQPRTPILLLRDNRTASARARTPSPSGVAAGRPRPAARHWFQVGFSPSGAGDGASRRAANRTASPQPPQLSNLRPPSHVDRMVGDDPYNPYKYSDDNPYYNYYDTYERPRSGSRHRPGYGTGYFQYGLPDLVPDPYYIQASTYVQKMSMYNLRCAAEENCLASSAYRADVRDYDHRVLLRFPQRVKNQGTSDFLPSRPRYSWEWHSCHQHYHSMDEFSHYDLLDASTQRRVAEGHKASFCLEDTSCDYGYHRRFACTAHTQGLSPGCYDTYAADIDCQWIDITDVQPGNYILKVSVNPSYLVPESDYSNNVVRCEIRYTGHHAYASGCTISPY</sequence>
<dbReference type="EC" id="1.4.3.13" evidence="12"/>
<dbReference type="EMBL" id="U11038">
    <property type="protein sequence ID" value="AAC52176.1"/>
    <property type="molecule type" value="mRNA"/>
</dbReference>
<dbReference type="EMBL" id="J02903">
    <property type="protein sequence ID" value="AAA41537.1"/>
    <property type="molecule type" value="mRNA"/>
</dbReference>
<dbReference type="EMBL" id="BC078861">
    <property type="protein sequence ID" value="AAH78861.1"/>
    <property type="molecule type" value="mRNA"/>
</dbReference>
<dbReference type="PIR" id="B40557">
    <property type="entry name" value="OXRTL"/>
</dbReference>
<dbReference type="RefSeq" id="NP_001400932.1">
    <property type="nucleotide sequence ID" value="NM_001414003.1"/>
</dbReference>
<dbReference type="RefSeq" id="NP_058757.1">
    <property type="nucleotide sequence ID" value="NM_017061.2"/>
</dbReference>
<dbReference type="RefSeq" id="XP_006254775.1">
    <property type="nucleotide sequence ID" value="XM_006254713.3"/>
</dbReference>
<dbReference type="RefSeq" id="XP_006254776.1">
    <property type="nucleotide sequence ID" value="XM_006254714.3"/>
</dbReference>
<dbReference type="SMR" id="P16636"/>
<dbReference type="FunCoup" id="P16636">
    <property type="interactions" value="297"/>
</dbReference>
<dbReference type="IntAct" id="P16636">
    <property type="interactions" value="2"/>
</dbReference>
<dbReference type="STRING" id="10116.ENSRNOP00000065314"/>
<dbReference type="GlyCosmos" id="P16636">
    <property type="glycosylation" value="2 sites, No reported glycans"/>
</dbReference>
<dbReference type="GlyGen" id="P16636">
    <property type="glycosylation" value="2 sites"/>
</dbReference>
<dbReference type="PhosphoSitePlus" id="P16636"/>
<dbReference type="PaxDb" id="10116-ENSRNOP00000065314"/>
<dbReference type="Ensembl" id="ENSRNOT00000019844.7">
    <property type="protein sequence ID" value="ENSRNOP00000019844.3"/>
    <property type="gene ID" value="ENSRNOG00000014426.8"/>
</dbReference>
<dbReference type="GeneID" id="24914"/>
<dbReference type="UCSC" id="RGD:3015">
    <property type="organism name" value="rat"/>
</dbReference>
<dbReference type="AGR" id="RGD:3015"/>
<dbReference type="RGD" id="3015">
    <property type="gene designation" value="Lox"/>
</dbReference>
<dbReference type="eggNOG" id="ENOG502QWQR">
    <property type="taxonomic scope" value="Eukaryota"/>
</dbReference>
<dbReference type="GeneTree" id="ENSGT00940000154779"/>
<dbReference type="HOGENOM" id="CLU_002555_2_1_1"/>
<dbReference type="InParanoid" id="P16636"/>
<dbReference type="OMA" id="GCHMSTY"/>
<dbReference type="OrthoDB" id="547291at2759"/>
<dbReference type="PhylomeDB" id="P16636"/>
<dbReference type="TreeFam" id="TF326061"/>
<dbReference type="BRENDA" id="1.4.3.13">
    <property type="organism ID" value="5301"/>
</dbReference>
<dbReference type="BRENDA" id="3.4.24.14">
    <property type="organism ID" value="5301"/>
</dbReference>
<dbReference type="Reactome" id="R-RNO-1566948">
    <property type="pathway name" value="Elastic fibre formation"/>
</dbReference>
<dbReference type="Reactome" id="R-RNO-2243919">
    <property type="pathway name" value="Crosslinking of collagen fibrils"/>
</dbReference>
<dbReference type="PRO" id="PR:P16636"/>
<dbReference type="Proteomes" id="UP000002494">
    <property type="component" value="Chromosome 18"/>
</dbReference>
<dbReference type="Bgee" id="ENSRNOG00000014426">
    <property type="expression patterns" value="Expressed in lung and 19 other cell types or tissues"/>
</dbReference>
<dbReference type="GO" id="GO:0005581">
    <property type="term" value="C:collagen trimer"/>
    <property type="evidence" value="ECO:0000266"/>
    <property type="project" value="RGD"/>
</dbReference>
<dbReference type="GO" id="GO:0062023">
    <property type="term" value="C:collagen-containing extracellular matrix"/>
    <property type="evidence" value="ECO:0000318"/>
    <property type="project" value="GO_Central"/>
</dbReference>
<dbReference type="GO" id="GO:0031012">
    <property type="term" value="C:extracellular matrix"/>
    <property type="evidence" value="ECO:0000314"/>
    <property type="project" value="MGI"/>
</dbReference>
<dbReference type="GO" id="GO:0005576">
    <property type="term" value="C:extracellular region"/>
    <property type="evidence" value="ECO:0000266"/>
    <property type="project" value="RGD"/>
</dbReference>
<dbReference type="GO" id="GO:0005615">
    <property type="term" value="C:extracellular space"/>
    <property type="evidence" value="ECO:0000250"/>
    <property type="project" value="UniProtKB"/>
</dbReference>
<dbReference type="GO" id="GO:0005518">
    <property type="term" value="F:collagen binding"/>
    <property type="evidence" value="ECO:0000250"/>
    <property type="project" value="UniProtKB"/>
</dbReference>
<dbReference type="GO" id="GO:0005507">
    <property type="term" value="F:copper ion binding"/>
    <property type="evidence" value="ECO:0000315"/>
    <property type="project" value="RGD"/>
</dbReference>
<dbReference type="GO" id="GO:0060090">
    <property type="term" value="F:molecular adaptor activity"/>
    <property type="evidence" value="ECO:0000266"/>
    <property type="project" value="RGD"/>
</dbReference>
<dbReference type="GO" id="GO:0004720">
    <property type="term" value="F:protein-lysine 6-oxidase activity"/>
    <property type="evidence" value="ECO:0000314"/>
    <property type="project" value="RGD"/>
</dbReference>
<dbReference type="GO" id="GO:0036094">
    <property type="term" value="F:small molecule binding"/>
    <property type="evidence" value="ECO:0000266"/>
    <property type="project" value="RGD"/>
</dbReference>
<dbReference type="GO" id="GO:0035904">
    <property type="term" value="P:aorta development"/>
    <property type="evidence" value="ECO:0000266"/>
    <property type="project" value="RGD"/>
</dbReference>
<dbReference type="GO" id="GO:0035905">
    <property type="term" value="P:ascending aorta development"/>
    <property type="evidence" value="ECO:0000266"/>
    <property type="project" value="RGD"/>
</dbReference>
<dbReference type="GO" id="GO:0001568">
    <property type="term" value="P:blood vessel development"/>
    <property type="evidence" value="ECO:0000266"/>
    <property type="project" value="RGD"/>
</dbReference>
<dbReference type="GO" id="GO:0048514">
    <property type="term" value="P:blood vessel morphogenesis"/>
    <property type="evidence" value="ECO:0000250"/>
    <property type="project" value="UniProtKB"/>
</dbReference>
<dbReference type="GO" id="GO:0030282">
    <property type="term" value="P:bone mineralization"/>
    <property type="evidence" value="ECO:0000266"/>
    <property type="project" value="RGD"/>
</dbReference>
<dbReference type="GO" id="GO:0060326">
    <property type="term" value="P:cell chemotaxis"/>
    <property type="evidence" value="ECO:0000315"/>
    <property type="project" value="MGI"/>
</dbReference>
<dbReference type="GO" id="GO:1990869">
    <property type="term" value="P:cellular response to chemokine"/>
    <property type="evidence" value="ECO:0000266"/>
    <property type="project" value="RGD"/>
</dbReference>
<dbReference type="GO" id="GO:0030199">
    <property type="term" value="P:collagen fibril organization"/>
    <property type="evidence" value="ECO:0000314"/>
    <property type="project" value="RGD"/>
</dbReference>
<dbReference type="GO" id="GO:0061448">
    <property type="term" value="P:connective tissue development"/>
    <property type="evidence" value="ECO:0000266"/>
    <property type="project" value="RGD"/>
</dbReference>
<dbReference type="GO" id="GO:0035906">
    <property type="term" value="P:descending aorta development"/>
    <property type="evidence" value="ECO:0000266"/>
    <property type="project" value="RGD"/>
</dbReference>
<dbReference type="GO" id="GO:0071897">
    <property type="term" value="P:DNA biosynthetic process"/>
    <property type="evidence" value="ECO:0000266"/>
    <property type="project" value="RGD"/>
</dbReference>
<dbReference type="GO" id="GO:0048251">
    <property type="term" value="P:elastic fiber assembly"/>
    <property type="evidence" value="ECO:0000315"/>
    <property type="project" value="RGD"/>
</dbReference>
<dbReference type="GO" id="GO:0007507">
    <property type="term" value="P:heart development"/>
    <property type="evidence" value="ECO:0000266"/>
    <property type="project" value="RGD"/>
</dbReference>
<dbReference type="GO" id="GO:0030324">
    <property type="term" value="P:lung development"/>
    <property type="evidence" value="ECO:0000266"/>
    <property type="project" value="RGD"/>
</dbReference>
<dbReference type="GO" id="GO:0046716">
    <property type="term" value="P:muscle cell cellular homeostasis"/>
    <property type="evidence" value="ECO:0000266"/>
    <property type="project" value="RGD"/>
</dbReference>
<dbReference type="GO" id="GO:0055001">
    <property type="term" value="P:muscle cell development"/>
    <property type="evidence" value="ECO:0000266"/>
    <property type="project" value="RGD"/>
</dbReference>
<dbReference type="GO" id="GO:0051898">
    <property type="term" value="P:negative regulation of phosphatidylinositol 3-kinase/protein kinase B signal transduction"/>
    <property type="evidence" value="ECO:0000266"/>
    <property type="project" value="RGD"/>
</dbReference>
<dbReference type="GO" id="GO:0001649">
    <property type="term" value="P:osteoblast differentiation"/>
    <property type="evidence" value="ECO:0000266"/>
    <property type="project" value="RGD"/>
</dbReference>
<dbReference type="GO" id="GO:0018057">
    <property type="term" value="P:peptidyl-lysine oxidation"/>
    <property type="evidence" value="ECO:0000250"/>
    <property type="project" value="UniProtKB"/>
</dbReference>
<dbReference type="GO" id="GO:0035791">
    <property type="term" value="P:platelet-derived growth factor receptor-beta signaling pathway"/>
    <property type="evidence" value="ECO:0000315"/>
    <property type="project" value="MGI"/>
</dbReference>
<dbReference type="GO" id="GO:0018158">
    <property type="term" value="P:protein oxidation"/>
    <property type="evidence" value="ECO:0000315"/>
    <property type="project" value="MGI"/>
</dbReference>
<dbReference type="GO" id="GO:0042981">
    <property type="term" value="P:regulation of apoptotic process"/>
    <property type="evidence" value="ECO:0000266"/>
    <property type="project" value="RGD"/>
</dbReference>
<dbReference type="GO" id="GO:1903010">
    <property type="term" value="P:regulation of bone development"/>
    <property type="evidence" value="ECO:0000266"/>
    <property type="project" value="RGD"/>
</dbReference>
<dbReference type="GO" id="GO:0010468">
    <property type="term" value="P:regulation of gene expression"/>
    <property type="evidence" value="ECO:0000266"/>
    <property type="project" value="RGD"/>
</dbReference>
<dbReference type="GO" id="GO:0045652">
    <property type="term" value="P:regulation of megakaryocyte differentiation"/>
    <property type="evidence" value="ECO:0000266"/>
    <property type="project" value="RGD"/>
</dbReference>
<dbReference type="GO" id="GO:2000586">
    <property type="term" value="P:regulation of platelet-derived growth factor receptor-beta signaling pathway"/>
    <property type="evidence" value="ECO:0000266"/>
    <property type="project" value="RGD"/>
</dbReference>
<dbReference type="GO" id="GO:1900120">
    <property type="term" value="P:regulation of receptor binding"/>
    <property type="evidence" value="ECO:0000315"/>
    <property type="project" value="MGI"/>
</dbReference>
<dbReference type="GO" id="GO:0016202">
    <property type="term" value="P:regulation of striated muscle tissue development"/>
    <property type="evidence" value="ECO:0000266"/>
    <property type="project" value="RGD"/>
</dbReference>
<dbReference type="GO" id="GO:0017015">
    <property type="term" value="P:regulation of transforming growth factor beta receptor signaling pathway"/>
    <property type="evidence" value="ECO:0000266"/>
    <property type="project" value="RGD"/>
</dbReference>
<dbReference type="GO" id="GO:0009725">
    <property type="term" value="P:response to hormone"/>
    <property type="evidence" value="ECO:0000314"/>
    <property type="project" value="RGD"/>
</dbReference>
<dbReference type="GO" id="GO:0048545">
    <property type="term" value="P:response to steroid hormone"/>
    <property type="evidence" value="ECO:0000314"/>
    <property type="project" value="RGD"/>
</dbReference>
<dbReference type="GO" id="GO:0009410">
    <property type="term" value="P:response to xenobiotic stimulus"/>
    <property type="evidence" value="ECO:0000270"/>
    <property type="project" value="RGD"/>
</dbReference>
<dbReference type="InterPro" id="IPR050912">
    <property type="entry name" value="LOX-like_protein"/>
</dbReference>
<dbReference type="InterPro" id="IPR001695">
    <property type="entry name" value="Lysyl_oxidase"/>
</dbReference>
<dbReference type="InterPro" id="IPR019828">
    <property type="entry name" value="Lysyl_oxidase_CS"/>
</dbReference>
<dbReference type="PANTHER" id="PTHR45817">
    <property type="entry name" value="LYSYL OXIDASE-LIKE-RELATED"/>
    <property type="match status" value="1"/>
</dbReference>
<dbReference type="PANTHER" id="PTHR45817:SF6">
    <property type="entry name" value="PROTEIN-LYSINE 6-OXIDASE"/>
    <property type="match status" value="1"/>
</dbReference>
<dbReference type="Pfam" id="PF01186">
    <property type="entry name" value="Lysyl_oxidase"/>
    <property type="match status" value="1"/>
</dbReference>
<dbReference type="PRINTS" id="PR00074">
    <property type="entry name" value="LYSYLOXIDASE"/>
</dbReference>
<dbReference type="PROSITE" id="PS00926">
    <property type="entry name" value="LYSYL_OXIDASE"/>
    <property type="match status" value="1"/>
</dbReference>
<comment type="function">
    <text evidence="3 7">Responsible for the post-translational oxidative deamination of peptidyl lysine residues in precursors to fibrous collagen and elastin (PubMed:16432278). Regulator of Ras expression. May play a role in tumor suppression. Plays a role in the aortic wall architecture (By similarity).</text>
</comment>
<comment type="catalytic activity">
    <reaction evidence="12">
        <text>L-lysyl-[protein] + O2 + H2O = (S)-2-amino-6-oxohexanoyl-[protein] + H2O2 + NH4(+)</text>
        <dbReference type="Rhea" id="RHEA:24544"/>
        <dbReference type="Rhea" id="RHEA-COMP:9752"/>
        <dbReference type="Rhea" id="RHEA-COMP:12448"/>
        <dbReference type="ChEBI" id="CHEBI:15377"/>
        <dbReference type="ChEBI" id="CHEBI:15379"/>
        <dbReference type="ChEBI" id="CHEBI:16240"/>
        <dbReference type="ChEBI" id="CHEBI:28938"/>
        <dbReference type="ChEBI" id="CHEBI:29969"/>
        <dbReference type="ChEBI" id="CHEBI:131803"/>
        <dbReference type="EC" id="1.4.3.13"/>
    </reaction>
</comment>
<comment type="cofactor">
    <cofactor evidence="7">
        <name>Cu cation</name>
        <dbReference type="ChEBI" id="CHEBI:23378"/>
    </cofactor>
</comment>
<comment type="cofactor">
    <cofactor evidence="4">
        <name>lysine tyrosylquinone residue</name>
        <dbReference type="ChEBI" id="CHEBI:20489"/>
    </cofactor>
    <text evidence="1">Contains 1 lysine tyrosylquinone.</text>
</comment>
<comment type="subunit">
    <text evidence="2">Interacts with MFAP4. Interacts (via propeptide) with EFEMP2; this interaction is strong and facilitates formation of ternary complexes with ELN during elastic fiber assembly; this interaction limits interaction of EFEMP2 with FBLN5.</text>
</comment>
<comment type="subcellular location">
    <subcellularLocation>
        <location evidence="3">Secreted</location>
    </subcellularLocation>
    <subcellularLocation>
        <location>Secreted</location>
        <location>Extracellular space</location>
    </subcellularLocation>
</comment>
<comment type="tissue specificity">
    <text evidence="8">Aorta and lung.</text>
</comment>
<comment type="PTM">
    <text evidence="4">The lysine tyrosylquinone cross-link (LTQ) is generated by condensation of the epsilon-amino group of a lysine with a topaquinone produced by oxidation of tyrosine.</text>
</comment>
<comment type="PTM">
    <text evidence="2 3">Proteolytically cleaved by BMP1 which removes the propeptide (By similarity). Also proteolytically cleaved by ADAMTS2 and ADAMTS14, but not by ADAMTS3, at an additional cleavage site downstream of the BMP1 cleavage site (By similarity). The propeptide plays a role in directing the deposition of this enzyme to elastic fibers, via interaction with tropoelastin (By similarity). Cleavage by BMP1 to remove the propeptide does not increase enzymatic activity but increases binding to collagen (By similarity). Cleavage by ADAMTS2 produces a form with reduced collagen-binding activity (By similarity).</text>
</comment>
<comment type="PTM">
    <text evidence="2">Sulfated at Tyr-181 and also at either Tyr-177 or Tyr-178 which enhances binding to collagen.</text>
</comment>
<comment type="similarity">
    <text evidence="11">Belongs to the lysyl oxidase family.</text>
</comment>
<reference key="1">
    <citation type="journal article" date="1990" name="Biochemistry">
        <title>Cloning of rat aorta lysyl oxidase cDNA: complete codons and predicted amino acid sequence.</title>
        <authorList>
            <person name="Trackman P.C."/>
            <person name="Pratt A.M."/>
            <person name="Wolanski A."/>
            <person name="Tang S.-S."/>
            <person name="Offner G.D."/>
            <person name="Troxler R.F."/>
            <person name="Kagan H.M."/>
        </authorList>
    </citation>
    <scope>NUCLEOTIDE SEQUENCE [MRNA]</scope>
    <scope>TISSUE SPECIFICITY</scope>
    <source>
        <tissue>Aorta</tissue>
    </source>
</reference>
<reference key="2">
    <citation type="journal article" date="1991" name="Biochemistry">
        <title>Cloning of rat aorta lysyl oxidase cDNA: complete codons and predicted amino acid sequence.</title>
        <authorList>
            <person name="Trackman P.C."/>
            <person name="Pratt A.M."/>
            <person name="Wolanski A."/>
            <person name="Tang S.-S."/>
            <person name="Offner G.D."/>
            <person name="Troxler R.F."/>
            <person name="Kagan H.M."/>
        </authorList>
    </citation>
    <scope>NUCLEOTIDE SEQUENCE [MRNA]</scope>
    <scope>SEQUENCE REVISION</scope>
</reference>
<reference key="3">
    <citation type="journal article" date="2004" name="Genome Res.">
        <title>The status, quality, and expansion of the NIH full-length cDNA project: the Mammalian Gene Collection (MGC).</title>
        <authorList>
            <consortium name="The MGC Project Team"/>
        </authorList>
    </citation>
    <scope>NUCLEOTIDE SEQUENCE [LARGE SCALE MRNA]</scope>
    <source>
        <tissue>Testis</tissue>
    </source>
</reference>
<reference key="4">
    <citation type="journal article" date="1996" name="J. Biol. Chem.">
        <title>Metalloproteinase activity secreted by fibrogenic cells in the processing of prolysyl oxidase. Potential role of procollagen C-proteinase.</title>
        <authorList>
            <person name="Panchenko M.V."/>
            <person name="Stetler-Stevenson W.G."/>
            <person name="Trubetskoy O.V."/>
            <person name="Gacheru S.N."/>
            <person name="Kagan H.M."/>
        </authorList>
    </citation>
    <scope>PROTEIN SEQUENCE OF 163-167</scope>
    <scope>PROTEOLYTIC PROCESSING OF N-TERMINUS</scope>
</reference>
<reference key="5">
    <citation type="journal article" date="2006" name="Toxicol. Sci.">
        <title>Inhibition of the expression of lysyl oxidase and its substrates in cadmium-resistant rat fetal lung fibroblasts.</title>
        <authorList>
            <person name="Zhao Y."/>
            <person name="Gao S."/>
            <person name="Chou I.N."/>
            <person name="Toselli P."/>
            <person name="Stone P."/>
            <person name="Li W."/>
        </authorList>
    </citation>
    <scope>FUNCTION</scope>
    <scope>COFACTOR</scope>
</reference>
<reference key="6">
    <citation type="journal article" date="1992" name="J. Biol. Chem.">
        <title>Post-translational glycosylation and proteolytic processing of a lysyl oxidase precursor.</title>
        <authorList>
            <person name="Trackman P.C."/>
            <person name="Bedell-Hogan D."/>
            <person name="Tang J."/>
            <person name="Kagan H.M."/>
        </authorList>
    </citation>
    <scope>PROTEOLYTIC PROCESSING OF N-TERMINUS</scope>
</reference>
<reference key="7">
    <citation type="journal article" date="2015" name="J. Proteome Res.">
        <title>Peptidomics for studying limited proteolysis.</title>
        <authorList>
            <person name="Tsuchiya T."/>
            <person name="Osaki T."/>
            <person name="Minamino N."/>
            <person name="Sasaki K."/>
        </authorList>
    </citation>
    <scope>CLEAVAGE OF SIGNAL PEPTIDE AFTER CYS-21</scope>
    <scope>IDENTIFICATION BY MASS SPECTROMETRY</scope>
</reference>
<proteinExistence type="evidence at protein level"/>
<keyword id="KW-0186">Copper</keyword>
<keyword id="KW-0903">Direct protein sequencing</keyword>
<keyword id="KW-1015">Disulfide bond</keyword>
<keyword id="KW-0325">Glycoprotein</keyword>
<keyword id="KW-0886">LTQ</keyword>
<keyword id="KW-0479">Metal-binding</keyword>
<keyword id="KW-0560">Oxidoreductase</keyword>
<keyword id="KW-1185">Reference proteome</keyword>
<keyword id="KW-0964">Secreted</keyword>
<keyword id="KW-0732">Signal</keyword>
<keyword id="KW-0765">Sulfation</keyword>
<keyword id="KW-0801">TPQ</keyword>
<protein>
    <recommendedName>
        <fullName evidence="11">Protein-lysine 6-oxidase</fullName>
        <ecNumber evidence="12">1.4.3.13</ecNumber>
    </recommendedName>
    <alternativeName>
        <fullName>Lysyl oxidase</fullName>
    </alternativeName>
    <component>
        <recommendedName>
            <fullName evidence="2">Protein-lysine 6-oxidase, long form</fullName>
        </recommendedName>
    </component>
    <component>
        <recommendedName>
            <fullName evidence="2">Protein-lysine 6-oxidase, short form</fullName>
        </recommendedName>
    </component>
</protein>
<accession>P16636</accession>
<name>LYOX_RAT</name>
<evidence type="ECO:0000250" key="1"/>
<evidence type="ECO:0000250" key="2">
    <source>
        <dbReference type="UniProtKB" id="P28300"/>
    </source>
</evidence>
<evidence type="ECO:0000250" key="3">
    <source>
        <dbReference type="UniProtKB" id="P28301"/>
    </source>
</evidence>
<evidence type="ECO:0000250" key="4">
    <source>
        <dbReference type="UniProtKB" id="P33072"/>
    </source>
</evidence>
<evidence type="ECO:0000255" key="5"/>
<evidence type="ECO:0000256" key="6">
    <source>
        <dbReference type="SAM" id="MobiDB-lite"/>
    </source>
</evidence>
<evidence type="ECO:0000269" key="7">
    <source>
    </source>
</evidence>
<evidence type="ECO:0000269" key="8">
    <source>
    </source>
</evidence>
<evidence type="ECO:0000269" key="9">
    <source>
    </source>
</evidence>
<evidence type="ECO:0000269" key="10">
    <source>
    </source>
</evidence>
<evidence type="ECO:0000305" key="11"/>
<evidence type="ECO:0000305" key="12">
    <source>
    </source>
</evidence>
<evidence type="ECO:0000312" key="13">
    <source>
        <dbReference type="RGD" id="3015"/>
    </source>
</evidence>
<feature type="signal peptide" evidence="9">
    <location>
        <begin position="1"/>
        <end position="21"/>
    </location>
</feature>
<feature type="propeptide" id="PRO_0000018524" description="Removed by BMP1" evidence="10">
    <location>
        <begin position="22"/>
        <end position="162"/>
    </location>
</feature>
<feature type="chain" id="PRO_0000018525" description="Protein-lysine 6-oxidase, long form" evidence="10">
    <location>
        <begin position="163"/>
        <end position="411"/>
    </location>
</feature>
<feature type="chain" id="PRO_0000447888" description="Protein-lysine 6-oxidase, short form" evidence="2">
    <location>
        <begin position="213"/>
        <end position="411"/>
    </location>
</feature>
<feature type="region of interest" description="Disordered" evidence="6">
    <location>
        <begin position="60"/>
        <end position="168"/>
    </location>
</feature>
<feature type="region of interest" description="Lysyl-oxidase like">
    <location>
        <begin position="207"/>
        <end position="411"/>
    </location>
</feature>
<feature type="binding site" evidence="5">
    <location>
        <position position="286"/>
    </location>
    <ligand>
        <name>Cu cation</name>
        <dbReference type="ChEBI" id="CHEBI:23378"/>
    </ligand>
</feature>
<feature type="binding site" evidence="5">
    <location>
        <position position="288"/>
    </location>
    <ligand>
        <name>Cu cation</name>
        <dbReference type="ChEBI" id="CHEBI:23378"/>
    </ligand>
</feature>
<feature type="binding site" evidence="5">
    <location>
        <position position="290"/>
    </location>
    <ligand>
        <name>Cu cation</name>
        <dbReference type="ChEBI" id="CHEBI:23378"/>
    </ligand>
</feature>
<feature type="site" description="Cleavage; by ADAMTS2 and ADAMTS14" evidence="2">
    <location>
        <begin position="212"/>
        <end position="213"/>
    </location>
</feature>
<feature type="modified residue" description="Sulfotyrosine" evidence="2">
    <location>
        <position position="181"/>
    </location>
</feature>
<feature type="modified residue" description="2',4',5'-topaquinone" evidence="4">
    <location>
        <position position="349"/>
    </location>
</feature>
<feature type="glycosylation site" description="N-linked (GlcNAc...) asparagine" evidence="5">
    <location>
        <position position="91"/>
    </location>
</feature>
<feature type="glycosylation site" description="N-linked (GlcNAc...) asparagine" evidence="5">
    <location>
        <position position="138"/>
    </location>
</feature>
<feature type="disulfide bond" evidence="4">
    <location>
        <begin position="232"/>
        <end position="238"/>
    </location>
</feature>
<feature type="disulfide bond" evidence="4">
    <location>
        <begin position="285"/>
        <end position="334"/>
    </location>
</feature>
<feature type="disulfide bond" evidence="4">
    <location>
        <begin position="318"/>
        <end position="324"/>
    </location>
</feature>
<feature type="disulfide bond" evidence="4">
    <location>
        <begin position="345"/>
        <end position="355"/>
    </location>
</feature>
<feature type="disulfide bond" evidence="4">
    <location>
        <begin position="392"/>
        <end position="406"/>
    </location>
</feature>
<feature type="cross-link" description="Lysine tyrosylquinone (Lys-Tyr)" evidence="4">
    <location>
        <begin position="314"/>
        <end position="349"/>
    </location>
</feature>
<organism>
    <name type="scientific">Rattus norvegicus</name>
    <name type="common">Rat</name>
    <dbReference type="NCBI Taxonomy" id="10116"/>
    <lineage>
        <taxon>Eukaryota</taxon>
        <taxon>Metazoa</taxon>
        <taxon>Chordata</taxon>
        <taxon>Craniata</taxon>
        <taxon>Vertebrata</taxon>
        <taxon>Euteleostomi</taxon>
        <taxon>Mammalia</taxon>
        <taxon>Eutheria</taxon>
        <taxon>Euarchontoglires</taxon>
        <taxon>Glires</taxon>
        <taxon>Rodentia</taxon>
        <taxon>Myomorpha</taxon>
        <taxon>Muroidea</taxon>
        <taxon>Muridae</taxon>
        <taxon>Murinae</taxon>
        <taxon>Rattus</taxon>
    </lineage>
</organism>
<gene>
    <name evidence="13" type="primary">Lox</name>
</gene>